<protein>
    <recommendedName>
        <fullName evidence="1">Putative HTH-type transcriptional regulatory protein PF1851</fullName>
    </recommendedName>
</protein>
<comment type="sequence caution" evidence="2">
    <conflict type="erroneous initiation">
        <sequence resource="EMBL-CDS" id="AAL81975"/>
    </conflict>
</comment>
<accession>Q8TZX4</accession>
<sequence>MDKEQLTTVVEKMLNSIGFKTARVSFRGGCFDLVATRQILLLFIKTLVNIDKFTEEQAEDLKRLAKLFRASALLVGLRTKNIELEDGVVYERFGIYAVNPETLFSILAGTEYPLVMAERGGFFVRIDGERLRELREKYGYSTTELAEMLGVSRKSVQRYEKGEGMVSIDVAIRLEEIFDEPLVKPIDIFKAKIEKVTLSSPPENELEKEVFDRLERLGMSVVKIKRAPFNAVTKEEDEEVNLLTGIDEKKTPSTIRRVRLVNQIAEFVESEGVFVLNEKKTEVVGKVPIIPKDILNKVRDVDELMEIIKELRSST</sequence>
<name>Y1851_PYRFU</name>
<feature type="chain" id="PRO_0000144862" description="Putative HTH-type transcriptional regulatory protein PF1851">
    <location>
        <begin position="1"/>
        <end position="315"/>
    </location>
</feature>
<feature type="domain" description="HTH cro/C1-type" evidence="1">
    <location>
        <begin position="131"/>
        <end position="189"/>
    </location>
</feature>
<feature type="DNA-binding region" description="H-T-H motif" evidence="1">
    <location>
        <begin position="142"/>
        <end position="161"/>
    </location>
</feature>
<reference key="1">
    <citation type="journal article" date="1999" name="Genetics">
        <title>Divergence of the hyperthermophilic archaea Pyrococcus furiosus and P. horikoshii inferred from complete genomic sequences.</title>
        <authorList>
            <person name="Maeder D.L."/>
            <person name="Weiss R.B."/>
            <person name="Dunn D.M."/>
            <person name="Cherry J.L."/>
            <person name="Gonzalez J.M."/>
            <person name="DiRuggiero J."/>
            <person name="Robb F.T."/>
        </authorList>
    </citation>
    <scope>NUCLEOTIDE SEQUENCE [LARGE SCALE GENOMIC DNA]</scope>
    <source>
        <strain>ATCC 43587 / DSM 3638 / JCM 8422 / Vc1</strain>
    </source>
</reference>
<evidence type="ECO:0000255" key="1">
    <source>
        <dbReference type="HAMAP-Rule" id="MF_00584"/>
    </source>
</evidence>
<evidence type="ECO:0000305" key="2"/>
<dbReference type="EMBL" id="AE009950">
    <property type="protein sequence ID" value="AAL81975.1"/>
    <property type="status" value="ALT_INIT"/>
    <property type="molecule type" value="Genomic_DNA"/>
</dbReference>
<dbReference type="SMR" id="Q8TZX4"/>
<dbReference type="STRING" id="186497.PF1851"/>
<dbReference type="PaxDb" id="186497-PF1851"/>
<dbReference type="KEGG" id="pfu:PF1851"/>
<dbReference type="PATRIC" id="fig|186497.12.peg.1922"/>
<dbReference type="eggNOG" id="arCOG04152">
    <property type="taxonomic scope" value="Archaea"/>
</dbReference>
<dbReference type="HOGENOM" id="CLU_075726_0_0_2"/>
<dbReference type="OrthoDB" id="31424at2157"/>
<dbReference type="PhylomeDB" id="Q8TZX4"/>
<dbReference type="Proteomes" id="UP000001013">
    <property type="component" value="Chromosome"/>
</dbReference>
<dbReference type="GO" id="GO:0003677">
    <property type="term" value="F:DNA binding"/>
    <property type="evidence" value="ECO:0007669"/>
    <property type="project" value="UniProtKB-KW"/>
</dbReference>
<dbReference type="GO" id="GO:0003700">
    <property type="term" value="F:DNA-binding transcription factor activity"/>
    <property type="evidence" value="ECO:0007669"/>
    <property type="project" value="UniProtKB-UniRule"/>
</dbReference>
<dbReference type="CDD" id="cd00093">
    <property type="entry name" value="HTH_XRE"/>
    <property type="match status" value="1"/>
</dbReference>
<dbReference type="Gene3D" id="1.10.260.40">
    <property type="entry name" value="lambda repressor-like DNA-binding domains"/>
    <property type="match status" value="1"/>
</dbReference>
<dbReference type="HAMAP" id="MF_00584">
    <property type="entry name" value="HTH_type_cro_C1"/>
    <property type="match status" value="1"/>
</dbReference>
<dbReference type="InterPro" id="IPR020886">
    <property type="entry name" value="Arc_TR_HTH"/>
</dbReference>
<dbReference type="InterPro" id="IPR001387">
    <property type="entry name" value="Cro/C1-type_HTH"/>
</dbReference>
<dbReference type="InterPro" id="IPR010982">
    <property type="entry name" value="Lambda_DNA-bd_dom_sf"/>
</dbReference>
<dbReference type="NCBIfam" id="NF003162">
    <property type="entry name" value="PRK04140.1"/>
    <property type="match status" value="1"/>
</dbReference>
<dbReference type="Pfam" id="PF01381">
    <property type="entry name" value="HTH_3"/>
    <property type="match status" value="1"/>
</dbReference>
<dbReference type="SMART" id="SM00530">
    <property type="entry name" value="HTH_XRE"/>
    <property type="match status" value="1"/>
</dbReference>
<dbReference type="SUPFAM" id="SSF47413">
    <property type="entry name" value="lambda repressor-like DNA-binding domains"/>
    <property type="match status" value="1"/>
</dbReference>
<dbReference type="PROSITE" id="PS50943">
    <property type="entry name" value="HTH_CROC1"/>
    <property type="match status" value="1"/>
</dbReference>
<keyword id="KW-0238">DNA-binding</keyword>
<keyword id="KW-1185">Reference proteome</keyword>
<keyword id="KW-0804">Transcription</keyword>
<keyword id="KW-0805">Transcription regulation</keyword>
<gene>
    <name type="ordered locus">PF1851</name>
</gene>
<proteinExistence type="inferred from homology"/>
<organism>
    <name type="scientific">Pyrococcus furiosus (strain ATCC 43587 / DSM 3638 / JCM 8422 / Vc1)</name>
    <dbReference type="NCBI Taxonomy" id="186497"/>
    <lineage>
        <taxon>Archaea</taxon>
        <taxon>Methanobacteriati</taxon>
        <taxon>Methanobacteriota</taxon>
        <taxon>Thermococci</taxon>
        <taxon>Thermococcales</taxon>
        <taxon>Thermococcaceae</taxon>
        <taxon>Pyrococcus</taxon>
    </lineage>
</organism>